<feature type="chain" id="PRO_1000166343" description="Large ribosomal subunit protein uL16">
    <location>
        <begin position="1"/>
        <end position="136"/>
    </location>
</feature>
<keyword id="KW-0687">Ribonucleoprotein</keyword>
<keyword id="KW-0689">Ribosomal protein</keyword>
<keyword id="KW-0694">RNA-binding</keyword>
<keyword id="KW-0699">rRNA-binding</keyword>
<keyword id="KW-0820">tRNA-binding</keyword>
<proteinExistence type="inferred from homology"/>
<accession>B8D842</accession>
<evidence type="ECO:0000255" key="1">
    <source>
        <dbReference type="HAMAP-Rule" id="MF_01342"/>
    </source>
</evidence>
<evidence type="ECO:0000305" key="2"/>
<reference key="1">
    <citation type="journal article" date="2009" name="Science">
        <title>The dynamics and time scale of ongoing genomic erosion in symbiotic bacteria.</title>
        <authorList>
            <person name="Moran N.A."/>
            <person name="McLaughlin H.J."/>
            <person name="Sorek R."/>
        </authorList>
    </citation>
    <scope>NUCLEOTIDE SEQUENCE [LARGE SCALE GENOMIC DNA]</scope>
    <source>
        <strain>Tuc7</strain>
    </source>
</reference>
<dbReference type="EMBL" id="CP001158">
    <property type="protein sequence ID" value="ACL30307.1"/>
    <property type="molecule type" value="Genomic_DNA"/>
</dbReference>
<dbReference type="RefSeq" id="WP_009874468.1">
    <property type="nucleotide sequence ID" value="NC_011834.1"/>
</dbReference>
<dbReference type="SMR" id="B8D842"/>
<dbReference type="KEGG" id="bau:BUAPTUC7_511"/>
<dbReference type="HOGENOM" id="CLU_078858_2_1_6"/>
<dbReference type="GO" id="GO:0022625">
    <property type="term" value="C:cytosolic large ribosomal subunit"/>
    <property type="evidence" value="ECO:0007669"/>
    <property type="project" value="TreeGrafter"/>
</dbReference>
<dbReference type="GO" id="GO:0019843">
    <property type="term" value="F:rRNA binding"/>
    <property type="evidence" value="ECO:0007669"/>
    <property type="project" value="UniProtKB-UniRule"/>
</dbReference>
<dbReference type="GO" id="GO:0003735">
    <property type="term" value="F:structural constituent of ribosome"/>
    <property type="evidence" value="ECO:0007669"/>
    <property type="project" value="InterPro"/>
</dbReference>
<dbReference type="GO" id="GO:0000049">
    <property type="term" value="F:tRNA binding"/>
    <property type="evidence" value="ECO:0007669"/>
    <property type="project" value="UniProtKB-KW"/>
</dbReference>
<dbReference type="GO" id="GO:0006412">
    <property type="term" value="P:translation"/>
    <property type="evidence" value="ECO:0007669"/>
    <property type="project" value="UniProtKB-UniRule"/>
</dbReference>
<dbReference type="CDD" id="cd01433">
    <property type="entry name" value="Ribosomal_L16_L10e"/>
    <property type="match status" value="1"/>
</dbReference>
<dbReference type="FunFam" id="3.90.1170.10:FF:000001">
    <property type="entry name" value="50S ribosomal protein L16"/>
    <property type="match status" value="1"/>
</dbReference>
<dbReference type="Gene3D" id="3.90.1170.10">
    <property type="entry name" value="Ribosomal protein L10e/L16"/>
    <property type="match status" value="1"/>
</dbReference>
<dbReference type="HAMAP" id="MF_01342">
    <property type="entry name" value="Ribosomal_uL16"/>
    <property type="match status" value="1"/>
</dbReference>
<dbReference type="InterPro" id="IPR047873">
    <property type="entry name" value="Ribosomal_uL16"/>
</dbReference>
<dbReference type="InterPro" id="IPR000114">
    <property type="entry name" value="Ribosomal_uL16_bact-type"/>
</dbReference>
<dbReference type="InterPro" id="IPR020798">
    <property type="entry name" value="Ribosomal_uL16_CS"/>
</dbReference>
<dbReference type="InterPro" id="IPR016180">
    <property type="entry name" value="Ribosomal_uL16_dom"/>
</dbReference>
<dbReference type="InterPro" id="IPR036920">
    <property type="entry name" value="Ribosomal_uL16_sf"/>
</dbReference>
<dbReference type="NCBIfam" id="TIGR01164">
    <property type="entry name" value="rplP_bact"/>
    <property type="match status" value="1"/>
</dbReference>
<dbReference type="PANTHER" id="PTHR12220">
    <property type="entry name" value="50S/60S RIBOSOMAL PROTEIN L16"/>
    <property type="match status" value="1"/>
</dbReference>
<dbReference type="PANTHER" id="PTHR12220:SF13">
    <property type="entry name" value="LARGE RIBOSOMAL SUBUNIT PROTEIN UL16M"/>
    <property type="match status" value="1"/>
</dbReference>
<dbReference type="Pfam" id="PF00252">
    <property type="entry name" value="Ribosomal_L16"/>
    <property type="match status" value="1"/>
</dbReference>
<dbReference type="PRINTS" id="PR00060">
    <property type="entry name" value="RIBOSOMALL16"/>
</dbReference>
<dbReference type="SUPFAM" id="SSF54686">
    <property type="entry name" value="Ribosomal protein L16p/L10e"/>
    <property type="match status" value="1"/>
</dbReference>
<dbReference type="PROSITE" id="PS00586">
    <property type="entry name" value="RIBOSOMAL_L16_1"/>
    <property type="match status" value="1"/>
</dbReference>
<dbReference type="PROSITE" id="PS00701">
    <property type="entry name" value="RIBOSOMAL_L16_2"/>
    <property type="match status" value="1"/>
</dbReference>
<organism>
    <name type="scientific">Buchnera aphidicola subsp. Acyrthosiphon pisum (strain Tuc7)</name>
    <dbReference type="NCBI Taxonomy" id="561501"/>
    <lineage>
        <taxon>Bacteria</taxon>
        <taxon>Pseudomonadati</taxon>
        <taxon>Pseudomonadota</taxon>
        <taxon>Gammaproteobacteria</taxon>
        <taxon>Enterobacterales</taxon>
        <taxon>Erwiniaceae</taxon>
        <taxon>Buchnera</taxon>
    </lineage>
</organism>
<protein>
    <recommendedName>
        <fullName evidence="1">Large ribosomal subunit protein uL16</fullName>
    </recommendedName>
    <alternativeName>
        <fullName evidence="2">50S ribosomal protein L16</fullName>
    </alternativeName>
</protein>
<comment type="function">
    <text evidence="1">Binds 23S rRNA and is also seen to make contacts with the A and possibly P site tRNAs.</text>
</comment>
<comment type="subunit">
    <text evidence="1">Part of the 50S ribosomal subunit.</text>
</comment>
<comment type="similarity">
    <text evidence="1">Belongs to the universal ribosomal protein uL16 family.</text>
</comment>
<sequence>MLQPKRTKFRKMHKGRNRGLASGTDINFGTFGLQAIDRGRLTARQIESARRAITRCIKRQGKMWIRIFPDKPITQKPLEVRMGKGKGNVEYWVALVQPGKILYELEGVTEEESRAAFKLAAAKLPIKTTFVNKMVM</sequence>
<name>RL16_BUCAT</name>
<gene>
    <name evidence="1" type="primary">rplP</name>
    <name type="ordered locus">BUAPTUC7_511</name>
</gene>